<reference key="1">
    <citation type="journal article" date="2003" name="Nature">
        <title>Genome sequence of Bacillus cereus and comparative analysis with Bacillus anthracis.</title>
        <authorList>
            <person name="Ivanova N."/>
            <person name="Sorokin A."/>
            <person name="Anderson I."/>
            <person name="Galleron N."/>
            <person name="Candelon B."/>
            <person name="Kapatral V."/>
            <person name="Bhattacharyya A."/>
            <person name="Reznik G."/>
            <person name="Mikhailova N."/>
            <person name="Lapidus A."/>
            <person name="Chu L."/>
            <person name="Mazur M."/>
            <person name="Goltsman E."/>
            <person name="Larsen N."/>
            <person name="D'Souza M."/>
            <person name="Walunas T."/>
            <person name="Grechkin Y."/>
            <person name="Pusch G."/>
            <person name="Haselkorn R."/>
            <person name="Fonstein M."/>
            <person name="Ehrlich S.D."/>
            <person name="Overbeek R."/>
            <person name="Kyrpides N.C."/>
        </authorList>
    </citation>
    <scope>NUCLEOTIDE SEQUENCE [LARGE SCALE GENOMIC DNA]</scope>
    <source>
        <strain>ATCC 14579 / DSM 31 / CCUG 7414 / JCM 2152 / NBRC 15305 / NCIMB 9373 / NCTC 2599 / NRRL B-3711</strain>
    </source>
</reference>
<comment type="function">
    <text evidence="1">NDH-1 shuttles electrons from NADH, via FMN and iron-sulfur (Fe-S) centers, to quinones in the respiratory chain. The immediate electron acceptor for the enzyme in this species is believed to be a menaquinone. Couples the redox reaction to proton translocation (for every two electrons transferred, four hydrogen ions are translocated across the cytoplasmic membrane), and thus conserves the redox energy in a proton gradient.</text>
</comment>
<comment type="catalytic activity">
    <reaction evidence="1">
        <text>a quinone + NADH + 5 H(+)(in) = a quinol + NAD(+) + 4 H(+)(out)</text>
        <dbReference type="Rhea" id="RHEA:57888"/>
        <dbReference type="ChEBI" id="CHEBI:15378"/>
        <dbReference type="ChEBI" id="CHEBI:24646"/>
        <dbReference type="ChEBI" id="CHEBI:57540"/>
        <dbReference type="ChEBI" id="CHEBI:57945"/>
        <dbReference type="ChEBI" id="CHEBI:132124"/>
    </reaction>
</comment>
<comment type="subunit">
    <text evidence="1">NDH-1 is composed of 14 different subunits. Subunits NuoA, H, J, K, L, M, N constitute the membrane sector of the complex.</text>
</comment>
<comment type="subcellular location">
    <subcellularLocation>
        <location evidence="1">Cell membrane</location>
        <topology evidence="1">Multi-pass membrane protein</topology>
    </subcellularLocation>
</comment>
<comment type="similarity">
    <text evidence="1">Belongs to the complex I subunit 4L family.</text>
</comment>
<dbReference type="EC" id="7.1.1.-" evidence="1"/>
<dbReference type="EMBL" id="AE016877">
    <property type="protein sequence ID" value="AAP12158.1"/>
    <property type="molecule type" value="Genomic_DNA"/>
</dbReference>
<dbReference type="RefSeq" id="NP_834957.1">
    <property type="nucleotide sequence ID" value="NC_004722.1"/>
</dbReference>
<dbReference type="RefSeq" id="WP_000100077.1">
    <property type="nucleotide sequence ID" value="NC_004722.1"/>
</dbReference>
<dbReference type="SMR" id="Q814X3"/>
<dbReference type="STRING" id="226900.BC_5294"/>
<dbReference type="KEGG" id="bce:BC5294"/>
<dbReference type="PATRIC" id="fig|226900.8.peg.5465"/>
<dbReference type="HOGENOM" id="CLU_144724_0_0_9"/>
<dbReference type="OrthoDB" id="9810120at2"/>
<dbReference type="Proteomes" id="UP000001417">
    <property type="component" value="Chromosome"/>
</dbReference>
<dbReference type="GO" id="GO:0030964">
    <property type="term" value="C:NADH dehydrogenase complex"/>
    <property type="evidence" value="ECO:0000318"/>
    <property type="project" value="GO_Central"/>
</dbReference>
<dbReference type="GO" id="GO:0005886">
    <property type="term" value="C:plasma membrane"/>
    <property type="evidence" value="ECO:0007669"/>
    <property type="project" value="UniProtKB-SubCell"/>
</dbReference>
<dbReference type="GO" id="GO:0050136">
    <property type="term" value="F:NADH:ubiquinone reductase (non-electrogenic) activity"/>
    <property type="evidence" value="ECO:0007669"/>
    <property type="project" value="UniProtKB-UniRule"/>
</dbReference>
<dbReference type="GO" id="GO:0048038">
    <property type="term" value="F:quinone binding"/>
    <property type="evidence" value="ECO:0007669"/>
    <property type="project" value="UniProtKB-KW"/>
</dbReference>
<dbReference type="GO" id="GO:0042773">
    <property type="term" value="P:ATP synthesis coupled electron transport"/>
    <property type="evidence" value="ECO:0007669"/>
    <property type="project" value="InterPro"/>
</dbReference>
<dbReference type="FunFam" id="1.10.287.3510:FF:000001">
    <property type="entry name" value="NADH-quinone oxidoreductase subunit K"/>
    <property type="match status" value="1"/>
</dbReference>
<dbReference type="Gene3D" id="1.10.287.3510">
    <property type="match status" value="1"/>
</dbReference>
<dbReference type="HAMAP" id="MF_01456">
    <property type="entry name" value="NDH1_NuoK"/>
    <property type="match status" value="1"/>
</dbReference>
<dbReference type="InterPro" id="IPR001133">
    <property type="entry name" value="NADH_UbQ_OxRdtase_chain4L/K"/>
</dbReference>
<dbReference type="InterPro" id="IPR039428">
    <property type="entry name" value="NUOK/Mnh_C1-like"/>
</dbReference>
<dbReference type="NCBIfam" id="NF004320">
    <property type="entry name" value="PRK05715.1-2"/>
    <property type="match status" value="1"/>
</dbReference>
<dbReference type="NCBIfam" id="NF004321">
    <property type="entry name" value="PRK05715.1-3"/>
    <property type="match status" value="1"/>
</dbReference>
<dbReference type="NCBIfam" id="NF004322">
    <property type="entry name" value="PRK05715.1-4"/>
    <property type="match status" value="1"/>
</dbReference>
<dbReference type="NCBIfam" id="NF004323">
    <property type="entry name" value="PRK05715.1-5"/>
    <property type="match status" value="1"/>
</dbReference>
<dbReference type="PANTHER" id="PTHR11434:SF16">
    <property type="entry name" value="NADH-UBIQUINONE OXIDOREDUCTASE CHAIN 4L"/>
    <property type="match status" value="1"/>
</dbReference>
<dbReference type="PANTHER" id="PTHR11434">
    <property type="entry name" value="NADH-UBIQUINONE OXIDOREDUCTASE SUBUNIT ND4L"/>
    <property type="match status" value="1"/>
</dbReference>
<dbReference type="Pfam" id="PF00420">
    <property type="entry name" value="Oxidored_q2"/>
    <property type="match status" value="1"/>
</dbReference>
<protein>
    <recommendedName>
        <fullName evidence="1">NADH-quinone oxidoreductase subunit K</fullName>
        <ecNumber evidence="1">7.1.1.-</ecNumber>
    </recommendedName>
    <alternativeName>
        <fullName evidence="1">NADH dehydrogenase I subunit K</fullName>
    </alternativeName>
    <alternativeName>
        <fullName evidence="1">NDH-1 subunit K</fullName>
    </alternativeName>
</protein>
<gene>
    <name evidence="1" type="primary">nuoK</name>
    <name type="ordered locus">BC_5294</name>
</gene>
<accession>Q814X3</accession>
<proteinExistence type="inferred from homology"/>
<keyword id="KW-1003">Cell membrane</keyword>
<keyword id="KW-0472">Membrane</keyword>
<keyword id="KW-0520">NAD</keyword>
<keyword id="KW-0874">Quinone</keyword>
<keyword id="KW-1185">Reference proteome</keyword>
<keyword id="KW-1278">Translocase</keyword>
<keyword id="KW-0812">Transmembrane</keyword>
<keyword id="KW-1133">Transmembrane helix</keyword>
<keyword id="KW-0813">Transport</keyword>
<feature type="chain" id="PRO_0000389944" description="NADH-quinone oxidoreductase subunit K">
    <location>
        <begin position="1"/>
        <end position="104"/>
    </location>
</feature>
<feature type="transmembrane region" description="Helical" evidence="1">
    <location>
        <begin position="4"/>
        <end position="24"/>
    </location>
</feature>
<feature type="transmembrane region" description="Helical" evidence="1">
    <location>
        <begin position="31"/>
        <end position="51"/>
    </location>
</feature>
<feature type="transmembrane region" description="Helical" evidence="1">
    <location>
        <begin position="67"/>
        <end position="87"/>
    </location>
</feature>
<name>NUOK_BACCR</name>
<evidence type="ECO:0000255" key="1">
    <source>
        <dbReference type="HAMAP-Rule" id="MF_01456"/>
    </source>
</evidence>
<sequence>MSSVPASAYLTLAIILFCIGLFGALTKRNTVIVLVCIELMLNAANLNLVAFSKLGLFPNLTGQIFSLFTMAVAAAEAALGLAILIALYRNRTTVQVDEMDTLKG</sequence>
<organism>
    <name type="scientific">Bacillus cereus (strain ATCC 14579 / DSM 31 / CCUG 7414 / JCM 2152 / NBRC 15305 / NCIMB 9373 / NCTC 2599 / NRRL B-3711)</name>
    <dbReference type="NCBI Taxonomy" id="226900"/>
    <lineage>
        <taxon>Bacteria</taxon>
        <taxon>Bacillati</taxon>
        <taxon>Bacillota</taxon>
        <taxon>Bacilli</taxon>
        <taxon>Bacillales</taxon>
        <taxon>Bacillaceae</taxon>
        <taxon>Bacillus</taxon>
        <taxon>Bacillus cereus group</taxon>
    </lineage>
</organism>